<dbReference type="EC" id="2.3.1.-" evidence="8"/>
<dbReference type="EMBL" id="AACD01000135">
    <property type="protein sequence ID" value="EAA59557.1"/>
    <property type="status" value="ALT_SEQ"/>
    <property type="molecule type" value="Genomic_DNA"/>
</dbReference>
<dbReference type="EMBL" id="BN001302">
    <property type="protein sequence ID" value="CBF73494.1"/>
    <property type="status" value="ALT_SEQ"/>
    <property type="molecule type" value="Genomic_DNA"/>
</dbReference>
<dbReference type="RefSeq" id="XP_681172.1">
    <property type="nucleotide sequence ID" value="XM_676080.1"/>
</dbReference>
<dbReference type="SMR" id="Q5AUX7"/>
<dbReference type="EnsemblFungi" id="CBF73494">
    <property type="protein sequence ID" value="CBF73494"/>
    <property type="gene ID" value="ANIA_07903"/>
</dbReference>
<dbReference type="GeneID" id="2869225"/>
<dbReference type="KEGG" id="ani:ANIA_07903"/>
<dbReference type="VEuPathDB" id="FungiDB:AN7903"/>
<dbReference type="eggNOG" id="KOG1202">
    <property type="taxonomic scope" value="Eukaryota"/>
</dbReference>
<dbReference type="HOGENOM" id="CLU_000022_16_2_1"/>
<dbReference type="InParanoid" id="Q5AUX7"/>
<dbReference type="OrthoDB" id="329835at2759"/>
<dbReference type="Proteomes" id="UP000000560">
    <property type="component" value="Chromosome II"/>
</dbReference>
<dbReference type="GO" id="GO:0016746">
    <property type="term" value="F:acyltransferase activity"/>
    <property type="evidence" value="ECO:0007669"/>
    <property type="project" value="UniProtKB-KW"/>
</dbReference>
<dbReference type="GO" id="GO:0008168">
    <property type="term" value="F:methyltransferase activity"/>
    <property type="evidence" value="ECO:0007669"/>
    <property type="project" value="UniProtKB-KW"/>
</dbReference>
<dbReference type="GO" id="GO:0031177">
    <property type="term" value="F:phosphopantetheine binding"/>
    <property type="evidence" value="ECO:0007669"/>
    <property type="project" value="InterPro"/>
</dbReference>
<dbReference type="GO" id="GO:0006633">
    <property type="term" value="P:fatty acid biosynthetic process"/>
    <property type="evidence" value="ECO:0000318"/>
    <property type="project" value="GO_Central"/>
</dbReference>
<dbReference type="GO" id="GO:0032259">
    <property type="term" value="P:methylation"/>
    <property type="evidence" value="ECO:0007669"/>
    <property type="project" value="UniProtKB-KW"/>
</dbReference>
<dbReference type="CDD" id="cd02440">
    <property type="entry name" value="AdoMet_MTases"/>
    <property type="match status" value="1"/>
</dbReference>
<dbReference type="CDD" id="cd00833">
    <property type="entry name" value="PKS"/>
    <property type="match status" value="1"/>
</dbReference>
<dbReference type="Gene3D" id="3.30.70.3290">
    <property type="match status" value="1"/>
</dbReference>
<dbReference type="Gene3D" id="3.40.47.10">
    <property type="match status" value="1"/>
</dbReference>
<dbReference type="Gene3D" id="1.10.1200.10">
    <property type="entry name" value="ACP-like"/>
    <property type="match status" value="1"/>
</dbReference>
<dbReference type="Gene3D" id="3.40.366.10">
    <property type="entry name" value="Malonyl-Coenzyme A Acyl Carrier Protein, domain 2"/>
    <property type="match status" value="2"/>
</dbReference>
<dbReference type="Gene3D" id="3.40.50.720">
    <property type="entry name" value="NAD(P)-binding Rossmann-like Domain"/>
    <property type="match status" value="1"/>
</dbReference>
<dbReference type="Gene3D" id="3.10.129.110">
    <property type="entry name" value="Polyketide synthase dehydratase"/>
    <property type="match status" value="1"/>
</dbReference>
<dbReference type="Gene3D" id="3.40.50.150">
    <property type="entry name" value="Vaccinia Virus protein VP39"/>
    <property type="match status" value="1"/>
</dbReference>
<dbReference type="InterPro" id="IPR001227">
    <property type="entry name" value="Ac_transferase_dom_sf"/>
</dbReference>
<dbReference type="InterPro" id="IPR036736">
    <property type="entry name" value="ACP-like_sf"/>
</dbReference>
<dbReference type="InterPro" id="IPR014043">
    <property type="entry name" value="Acyl_transferase_dom"/>
</dbReference>
<dbReference type="InterPro" id="IPR016035">
    <property type="entry name" value="Acyl_Trfase/lysoPLipase"/>
</dbReference>
<dbReference type="InterPro" id="IPR013120">
    <property type="entry name" value="Far_NAD-bd"/>
</dbReference>
<dbReference type="InterPro" id="IPR014031">
    <property type="entry name" value="Ketoacyl_synth_C"/>
</dbReference>
<dbReference type="InterPro" id="IPR014030">
    <property type="entry name" value="Ketoacyl_synth_N"/>
</dbReference>
<dbReference type="InterPro" id="IPR016036">
    <property type="entry name" value="Malonyl_transacylase_ACP-bd"/>
</dbReference>
<dbReference type="InterPro" id="IPR013217">
    <property type="entry name" value="Methyltransf_12"/>
</dbReference>
<dbReference type="InterPro" id="IPR036291">
    <property type="entry name" value="NAD(P)-bd_dom_sf"/>
</dbReference>
<dbReference type="InterPro" id="IPR020841">
    <property type="entry name" value="PKS_Beta-ketoAc_synthase_dom"/>
</dbReference>
<dbReference type="InterPro" id="IPR042104">
    <property type="entry name" value="PKS_dehydratase_sf"/>
</dbReference>
<dbReference type="InterPro" id="IPR049900">
    <property type="entry name" value="PKS_mFAS_DH"/>
</dbReference>
<dbReference type="InterPro" id="IPR020806">
    <property type="entry name" value="PKS_PP-bd"/>
</dbReference>
<dbReference type="InterPro" id="IPR050444">
    <property type="entry name" value="Polyketide_Synthase"/>
</dbReference>
<dbReference type="InterPro" id="IPR009081">
    <property type="entry name" value="PP-bd_ACP"/>
</dbReference>
<dbReference type="InterPro" id="IPR006162">
    <property type="entry name" value="Ppantetheine_attach_site"/>
</dbReference>
<dbReference type="InterPro" id="IPR029063">
    <property type="entry name" value="SAM-dependent_MTases_sf"/>
</dbReference>
<dbReference type="InterPro" id="IPR032088">
    <property type="entry name" value="SAT"/>
</dbReference>
<dbReference type="InterPro" id="IPR016039">
    <property type="entry name" value="Thiolase-like"/>
</dbReference>
<dbReference type="PANTHER" id="PTHR45681:SF6">
    <property type="entry name" value="POLYKETIDE SYNTHASE 37"/>
    <property type="match status" value="1"/>
</dbReference>
<dbReference type="PANTHER" id="PTHR45681">
    <property type="entry name" value="POLYKETIDE SYNTHASE 44-RELATED"/>
    <property type="match status" value="1"/>
</dbReference>
<dbReference type="Pfam" id="PF00698">
    <property type="entry name" value="Acyl_transf_1"/>
    <property type="match status" value="1"/>
</dbReference>
<dbReference type="Pfam" id="PF18558">
    <property type="entry name" value="HTH_51"/>
    <property type="match status" value="1"/>
</dbReference>
<dbReference type="Pfam" id="PF00109">
    <property type="entry name" value="ketoacyl-synt"/>
    <property type="match status" value="1"/>
</dbReference>
<dbReference type="Pfam" id="PF02801">
    <property type="entry name" value="Ketoacyl-synt_C"/>
    <property type="match status" value="1"/>
</dbReference>
<dbReference type="Pfam" id="PF08242">
    <property type="entry name" value="Methyltransf_12"/>
    <property type="match status" value="1"/>
</dbReference>
<dbReference type="Pfam" id="PF07993">
    <property type="entry name" value="NAD_binding_4"/>
    <property type="match status" value="1"/>
</dbReference>
<dbReference type="Pfam" id="PF00550">
    <property type="entry name" value="PP-binding"/>
    <property type="match status" value="1"/>
</dbReference>
<dbReference type="Pfam" id="PF16073">
    <property type="entry name" value="SAT"/>
    <property type="match status" value="1"/>
</dbReference>
<dbReference type="SMART" id="SM00827">
    <property type="entry name" value="PKS_AT"/>
    <property type="match status" value="1"/>
</dbReference>
<dbReference type="SMART" id="SM00825">
    <property type="entry name" value="PKS_KS"/>
    <property type="match status" value="1"/>
</dbReference>
<dbReference type="SMART" id="SM00823">
    <property type="entry name" value="PKS_PP"/>
    <property type="match status" value="1"/>
</dbReference>
<dbReference type="SMART" id="SM01294">
    <property type="entry name" value="PKS_PP_betabranch"/>
    <property type="match status" value="1"/>
</dbReference>
<dbReference type="SUPFAM" id="SSF47336">
    <property type="entry name" value="ACP-like"/>
    <property type="match status" value="1"/>
</dbReference>
<dbReference type="SUPFAM" id="SSF52151">
    <property type="entry name" value="FabD/lysophospholipase-like"/>
    <property type="match status" value="2"/>
</dbReference>
<dbReference type="SUPFAM" id="SSF51735">
    <property type="entry name" value="NAD(P)-binding Rossmann-fold domains"/>
    <property type="match status" value="1"/>
</dbReference>
<dbReference type="SUPFAM" id="SSF55048">
    <property type="entry name" value="Probable ACP-binding domain of malonyl-CoA ACP transacylase"/>
    <property type="match status" value="1"/>
</dbReference>
<dbReference type="SUPFAM" id="SSF53335">
    <property type="entry name" value="S-adenosyl-L-methionine-dependent methyltransferases"/>
    <property type="match status" value="1"/>
</dbReference>
<dbReference type="SUPFAM" id="SSF53901">
    <property type="entry name" value="Thiolase-like"/>
    <property type="match status" value="1"/>
</dbReference>
<dbReference type="PROSITE" id="PS50075">
    <property type="entry name" value="CARRIER"/>
    <property type="match status" value="1"/>
</dbReference>
<dbReference type="PROSITE" id="PS52004">
    <property type="entry name" value="KS3_2"/>
    <property type="match status" value="1"/>
</dbReference>
<dbReference type="PROSITE" id="PS00012">
    <property type="entry name" value="PHOSPHOPANTETHEINE"/>
    <property type="match status" value="1"/>
</dbReference>
<dbReference type="PROSITE" id="PS52019">
    <property type="entry name" value="PKS_MFAS_DH"/>
    <property type="match status" value="1"/>
</dbReference>
<feature type="chain" id="PRO_0000446352" description="Non-reducing polyketide synthase dbaI">
    <location>
        <begin position="1"/>
        <end position="2605"/>
    </location>
</feature>
<feature type="domain" description="Ketosynthase family 3 (KS3)" evidence="4 13">
    <location>
        <begin position="382"/>
        <end position="798"/>
    </location>
</feature>
<feature type="domain" description="PKS/mFAS DH" evidence="5">
    <location>
        <begin position="1285"/>
        <end position="1596"/>
    </location>
</feature>
<feature type="domain" description="Carrier" evidence="3">
    <location>
        <begin position="1665"/>
        <end position="1739"/>
    </location>
</feature>
<feature type="region of interest" description="N-terminal acylcarrier protein transacylase domain (SAT)" evidence="2 13">
    <location>
        <begin position="97"/>
        <end position="243"/>
    </location>
</feature>
<feature type="region of interest" description="Malonyl-CoA:ACP transacylase (MAT) domain" evidence="2 13">
    <location>
        <begin position="908"/>
        <end position="1195"/>
    </location>
</feature>
<feature type="region of interest" description="N-terminal hotdog fold" evidence="5">
    <location>
        <begin position="1285"/>
        <end position="1420"/>
    </location>
</feature>
<feature type="region of interest" description="Product template (PT) domain" evidence="2 13">
    <location>
        <begin position="1316"/>
        <end position="1594"/>
    </location>
</feature>
<feature type="region of interest" description="C-terminal hotdog fold" evidence="5">
    <location>
        <begin position="1447"/>
        <end position="1596"/>
    </location>
</feature>
<feature type="region of interest" description="Disordered" evidence="6">
    <location>
        <begin position="1742"/>
        <end position="1780"/>
    </location>
</feature>
<feature type="region of interest" description="Methyltransferase domain" evidence="2 13">
    <location>
        <begin position="1963"/>
        <end position="2151"/>
    </location>
</feature>
<feature type="region of interest" description="NADPH-binding (R) domain" evidence="2 13">
    <location>
        <begin position="2230"/>
        <end position="2473"/>
    </location>
</feature>
<feature type="compositionally biased region" description="Polar residues" evidence="6">
    <location>
        <begin position="1747"/>
        <end position="1757"/>
    </location>
</feature>
<feature type="active site" description="Nucleophile; for transacylase activity" evidence="1">
    <location>
        <position position="144"/>
    </location>
</feature>
<feature type="active site" description="Proton donor/acceptor; for transacylase activity" evidence="1">
    <location>
        <position position="262"/>
    </location>
</feature>
<feature type="active site" description="For beta-ketoacyl synthase activity" evidence="4">
    <location>
        <position position="547"/>
    </location>
</feature>
<feature type="active site" description="For beta-ketoacyl synthase activity" evidence="4">
    <location>
        <position position="682"/>
    </location>
</feature>
<feature type="active site" description="For beta-ketoacyl synthase activity" evidence="4">
    <location>
        <position position="721"/>
    </location>
</feature>
<feature type="active site" description="Proton acceptor; for dehydratase activity" evidence="5">
    <location>
        <position position="1320"/>
    </location>
</feature>
<feature type="active site" description="Proton donor; for dehydratase activity" evidence="5">
    <location>
        <position position="1504"/>
    </location>
</feature>
<feature type="modified residue" description="O-(pantetheine 4'-phosphoryl)serine" evidence="3">
    <location>
        <position position="1699"/>
    </location>
</feature>
<proteinExistence type="evidence at protein level"/>
<keyword id="KW-0012">Acyltransferase</keyword>
<keyword id="KW-0489">Methyltransferase</keyword>
<keyword id="KW-0511">Multifunctional enzyme</keyword>
<keyword id="KW-0521">NADP</keyword>
<keyword id="KW-0596">Phosphopantetheine</keyword>
<keyword id="KW-0597">Phosphoprotein</keyword>
<keyword id="KW-1185">Reference proteome</keyword>
<keyword id="KW-0808">Transferase</keyword>
<name>DBAI_EMENI</name>
<accession>Q5AUX7</accession>
<accession>A0A1U8QHY2</accession>
<accession>C8V4K3</accession>
<protein>
    <recommendedName>
        <fullName evidence="11">Non-reducing polyketide synthase dbaI</fullName>
        <shortName evidence="11">NR-PKS dbaI</shortName>
        <ecNumber evidence="8">2.3.1.-</ecNumber>
    </recommendedName>
    <alternativeName>
        <fullName evidence="11">Derivative of benzaldehyde biosynthesis cluster protein I</fullName>
    </alternativeName>
</protein>
<organism>
    <name type="scientific">Emericella nidulans (strain FGSC A4 / ATCC 38163 / CBS 112.46 / NRRL 194 / M139)</name>
    <name type="common">Aspergillus nidulans</name>
    <dbReference type="NCBI Taxonomy" id="227321"/>
    <lineage>
        <taxon>Eukaryota</taxon>
        <taxon>Fungi</taxon>
        <taxon>Dikarya</taxon>
        <taxon>Ascomycota</taxon>
        <taxon>Pezizomycotina</taxon>
        <taxon>Eurotiomycetes</taxon>
        <taxon>Eurotiomycetidae</taxon>
        <taxon>Eurotiales</taxon>
        <taxon>Aspergillaceae</taxon>
        <taxon>Aspergillus</taxon>
        <taxon>Aspergillus subgen. Nidulantes</taxon>
    </lineage>
</organism>
<comment type="function">
    <text evidence="7 8 14">Non-reducing polyketide synthase; part of the gene cluster that mediates the biosynthesis of the antibiotic 2,4-dihydroxy-3-methyl-6-(2-oxopropyl)benzaldehyde (DHMBA) and its derivatives (PubMed:22510154, PubMed:23001671). The direct non-reducing polyketide synthase dbaI product is 2,4-dihydroxy-3-methyl-6-(2-oxopropyl)benzaldehyde (DHMBA), produced by condensation of one acetyl-CoA starter unit with 4 malonyl-CoA units and one methylation step (PubMed:22510154). The FAD-dependent monooxygenase dbaH is responsible for the synthesis of yellow pigments derived from the oxidation of DHMBA (PubMed:23001671). The roles of dbaB, C, E and F have still to be determined (Probable).</text>
</comment>
<comment type="catalytic activity">
    <reaction evidence="7">
        <text>4 malonyl-CoA + acetyl-CoA + AH2 + S-adenosyl-L-methionine + 3 H(+) = 2,4-dihydroxy-3-methyl-6-(2-oxopropyl)benzaldehyde + A + S-adenosyl-L-homocysteine + 4 CO2 + 5 CoA + H2O</text>
        <dbReference type="Rhea" id="RHEA:64508"/>
        <dbReference type="ChEBI" id="CHEBI:13193"/>
        <dbReference type="ChEBI" id="CHEBI:15377"/>
        <dbReference type="ChEBI" id="CHEBI:15378"/>
        <dbReference type="ChEBI" id="CHEBI:16526"/>
        <dbReference type="ChEBI" id="CHEBI:17499"/>
        <dbReference type="ChEBI" id="CHEBI:57287"/>
        <dbReference type="ChEBI" id="CHEBI:57288"/>
        <dbReference type="ChEBI" id="CHEBI:57384"/>
        <dbReference type="ChEBI" id="CHEBI:57856"/>
        <dbReference type="ChEBI" id="CHEBI:59789"/>
        <dbReference type="ChEBI" id="CHEBI:155860"/>
    </reaction>
    <physiologicalReaction direction="left-to-right" evidence="7">
        <dbReference type="Rhea" id="RHEA:64509"/>
    </physiologicalReaction>
</comment>
<comment type="pathway">
    <text evidence="7 8">Secondary metabolite biosynthesis.</text>
</comment>
<comment type="induction">
    <text evidence="8 9">Deletion of the conserved eukaryotic csnE deneddylase subunit of the COP9 signalosome leading to defect in protein degradation results in the activation of the silenced dba gene cluster (PubMed:23001671). Expression is positively regulated by the dba cluster specific transcription factor dbaA (PubMed:23001671). Expression is also controlled by the transcription factor flbB (PubMed:25701285).</text>
</comment>
<comment type="domain">
    <text evidence="13">Multidomain protein; including an N-terminal starter unit:ACP transacylase (SAT) domain, a beta-ketoacyl synthase (KS) domain, a malonyl-CoA:ACP transacylase (MAT) domain, a product template domain, a acyl carrier protein (ACP) domain, a methyltransferase domain and a reductive NADPH-binding domain that is required for NADPH-dependent product release.</text>
</comment>
<comment type="sequence caution" evidence="12">
    <conflict type="erroneous gene model prediction">
        <sequence resource="EMBL-CDS" id="CBF73494"/>
    </conflict>
</comment>
<comment type="sequence caution" evidence="12">
    <conflict type="erroneous gene model prediction">
        <sequence resource="EMBL-CDS" id="EAA59557"/>
    </conflict>
</comment>
<reference key="1">
    <citation type="journal article" date="2005" name="Nature">
        <title>Sequencing of Aspergillus nidulans and comparative analysis with A. fumigatus and A. oryzae.</title>
        <authorList>
            <person name="Galagan J.E."/>
            <person name="Calvo S.E."/>
            <person name="Cuomo C."/>
            <person name="Ma L.-J."/>
            <person name="Wortman J.R."/>
            <person name="Batzoglou S."/>
            <person name="Lee S.-I."/>
            <person name="Bastuerkmen M."/>
            <person name="Spevak C.C."/>
            <person name="Clutterbuck J."/>
            <person name="Kapitonov V."/>
            <person name="Jurka J."/>
            <person name="Scazzocchio C."/>
            <person name="Farman M.L."/>
            <person name="Butler J."/>
            <person name="Purcell S."/>
            <person name="Harris S."/>
            <person name="Braus G.H."/>
            <person name="Draht O."/>
            <person name="Busch S."/>
            <person name="D'Enfert C."/>
            <person name="Bouchier C."/>
            <person name="Goldman G.H."/>
            <person name="Bell-Pedersen D."/>
            <person name="Griffiths-Jones S."/>
            <person name="Doonan J.H."/>
            <person name="Yu J."/>
            <person name="Vienken K."/>
            <person name="Pain A."/>
            <person name="Freitag M."/>
            <person name="Selker E.U."/>
            <person name="Archer D.B."/>
            <person name="Penalva M.A."/>
            <person name="Oakley B.R."/>
            <person name="Momany M."/>
            <person name="Tanaka T."/>
            <person name="Kumagai T."/>
            <person name="Asai K."/>
            <person name="Machida M."/>
            <person name="Nierman W.C."/>
            <person name="Denning D.W."/>
            <person name="Caddick M.X."/>
            <person name="Hynes M."/>
            <person name="Paoletti M."/>
            <person name="Fischer R."/>
            <person name="Miller B.L."/>
            <person name="Dyer P.S."/>
            <person name="Sachs M.S."/>
            <person name="Osmani S.A."/>
            <person name="Birren B.W."/>
        </authorList>
    </citation>
    <scope>NUCLEOTIDE SEQUENCE [LARGE SCALE GENOMIC DNA]</scope>
    <source>
        <strain>FGSC A4 / ATCC 38163 / CBS 112.46 / NRRL 194 / M139</strain>
    </source>
</reference>
<reference key="2">
    <citation type="journal article" date="2009" name="Fungal Genet. Biol.">
        <title>The 2008 update of the Aspergillus nidulans genome annotation: a community effort.</title>
        <authorList>
            <person name="Wortman J.R."/>
            <person name="Gilsenan J.M."/>
            <person name="Joardar V."/>
            <person name="Deegan J."/>
            <person name="Clutterbuck J."/>
            <person name="Andersen M.R."/>
            <person name="Archer D."/>
            <person name="Bencina M."/>
            <person name="Braus G."/>
            <person name="Coutinho P."/>
            <person name="von Dohren H."/>
            <person name="Doonan J."/>
            <person name="Driessen A.J."/>
            <person name="Durek P."/>
            <person name="Espeso E."/>
            <person name="Fekete E."/>
            <person name="Flipphi M."/>
            <person name="Estrada C.G."/>
            <person name="Geysens S."/>
            <person name="Goldman G."/>
            <person name="de Groot P.W."/>
            <person name="Hansen K."/>
            <person name="Harris S.D."/>
            <person name="Heinekamp T."/>
            <person name="Helmstaedt K."/>
            <person name="Henrissat B."/>
            <person name="Hofmann G."/>
            <person name="Homan T."/>
            <person name="Horio T."/>
            <person name="Horiuchi H."/>
            <person name="James S."/>
            <person name="Jones M."/>
            <person name="Karaffa L."/>
            <person name="Karanyi Z."/>
            <person name="Kato M."/>
            <person name="Keller N."/>
            <person name="Kelly D.E."/>
            <person name="Kiel J.A."/>
            <person name="Kim J.M."/>
            <person name="van der Klei I.J."/>
            <person name="Klis F.M."/>
            <person name="Kovalchuk A."/>
            <person name="Krasevec N."/>
            <person name="Kubicek C.P."/>
            <person name="Liu B."/>
            <person name="Maccabe A."/>
            <person name="Meyer V."/>
            <person name="Mirabito P."/>
            <person name="Miskei M."/>
            <person name="Mos M."/>
            <person name="Mullins J."/>
            <person name="Nelson D.R."/>
            <person name="Nielsen J."/>
            <person name="Oakley B.R."/>
            <person name="Osmani S.A."/>
            <person name="Pakula T."/>
            <person name="Paszewski A."/>
            <person name="Paulsen I."/>
            <person name="Pilsyk S."/>
            <person name="Pocsi I."/>
            <person name="Punt P.J."/>
            <person name="Ram A.F."/>
            <person name="Ren Q."/>
            <person name="Robellet X."/>
            <person name="Robson G."/>
            <person name="Seiboth B."/>
            <person name="van Solingen P."/>
            <person name="Specht T."/>
            <person name="Sun J."/>
            <person name="Taheri-Talesh N."/>
            <person name="Takeshita N."/>
            <person name="Ussery D."/>
            <person name="vanKuyk P.A."/>
            <person name="Visser H."/>
            <person name="van de Vondervoort P.J."/>
            <person name="de Vries R.P."/>
            <person name="Walton J."/>
            <person name="Xiang X."/>
            <person name="Xiong Y."/>
            <person name="Zeng A.P."/>
            <person name="Brandt B.W."/>
            <person name="Cornell M.J."/>
            <person name="van den Hondel C.A."/>
            <person name="Visser J."/>
            <person name="Oliver S.G."/>
            <person name="Turner G."/>
        </authorList>
    </citation>
    <scope>GENOME REANNOTATION</scope>
    <source>
        <strain>FGSC A4 / ATCC 38163 / CBS 112.46 / NRRL 194 / M139</strain>
    </source>
</reference>
<reference key="3">
    <citation type="journal article" date="2012" name="Appl. Environ. Microbiol.">
        <title>Breaking the silence: protein stabilization uncovers silenced biosynthetic gene clusters in the fungus Aspergillus nidulans.</title>
        <authorList>
            <person name="Gerke J."/>
            <person name="Bayram O."/>
            <person name="Feussner K."/>
            <person name="Landesfeind M."/>
            <person name="Shelest E."/>
            <person name="Feussner I."/>
            <person name="Braus G.H."/>
        </authorList>
    </citation>
    <scope>INDUCTION</scope>
    <scope>FUNCTION</scope>
    <scope>PATHWAY</scope>
</reference>
<reference key="4">
    <citation type="journal article" date="2012" name="J. Am. Chem. Soc.">
        <title>Illuminating the diversity of aromatic polyketide synthases in Aspergillus nidulans.</title>
        <authorList>
            <person name="Ahuja M."/>
            <person name="Chiang Y.M."/>
            <person name="Chang S.L."/>
            <person name="Praseuth M.B."/>
            <person name="Entwistle R."/>
            <person name="Sanchez J.F."/>
            <person name="Lo H.C."/>
            <person name="Yeh H.H."/>
            <person name="Oakley B.R."/>
            <person name="Wang C.C."/>
        </authorList>
    </citation>
    <scope>DOMAIN</scope>
    <scope>FUNCTION</scope>
    <scope>CATALYTIC ACTIVITY</scope>
    <scope>PATHWAY</scope>
</reference>
<reference key="5">
    <citation type="journal article" date="2015" name="Genetics">
        <title>Beyond asexual development: modifications in the gene expression profile caused by the absence of the Aspergillus nidulans transcription factor FlbB.</title>
        <authorList>
            <person name="Oiartzabal-Arano E."/>
            <person name="Garzia A."/>
            <person name="Gorostidi A."/>
            <person name="Ugalde U."/>
            <person name="Espeso E.A."/>
            <person name="Etxebeste O."/>
        </authorList>
    </citation>
    <scope>INDUCTION</scope>
</reference>
<evidence type="ECO:0000250" key="1">
    <source>
        <dbReference type="UniProtKB" id="A0A0K0MCJ4"/>
    </source>
</evidence>
<evidence type="ECO:0000255" key="2"/>
<evidence type="ECO:0000255" key="3">
    <source>
        <dbReference type="PROSITE-ProRule" id="PRU00258"/>
    </source>
</evidence>
<evidence type="ECO:0000255" key="4">
    <source>
        <dbReference type="PROSITE-ProRule" id="PRU01348"/>
    </source>
</evidence>
<evidence type="ECO:0000255" key="5">
    <source>
        <dbReference type="PROSITE-ProRule" id="PRU01363"/>
    </source>
</evidence>
<evidence type="ECO:0000256" key="6">
    <source>
        <dbReference type="SAM" id="MobiDB-lite"/>
    </source>
</evidence>
<evidence type="ECO:0000269" key="7">
    <source>
    </source>
</evidence>
<evidence type="ECO:0000269" key="8">
    <source>
    </source>
</evidence>
<evidence type="ECO:0000269" key="9">
    <source>
    </source>
</evidence>
<evidence type="ECO:0000303" key="10">
    <source>
    </source>
</evidence>
<evidence type="ECO:0000303" key="11">
    <source>
    </source>
</evidence>
<evidence type="ECO:0000305" key="12"/>
<evidence type="ECO:0000305" key="13">
    <source>
    </source>
</evidence>
<evidence type="ECO:0000305" key="14">
    <source>
    </source>
</evidence>
<sequence length="2605" mass="288997">MLGHRDFTTLPLSRREFLLFGPLALSFDQAAFEHLRKTIVNSEEHRWALEVLGSLPQYYATIVNAFPGINGRNEVQLEDLKGALHSGKPLATSFPLPNTLLIPLVMVLHLTEYSRFLQEISEELESGIDLFDASRHNKETVGFCTGLLSAMAVSSAGSREDFRKYAAVAVRLGLLVGVVVDSHDISSAQGPSKSISASWNSAQKREDARRIMDEFPQAYISVYYDEDRATITAPASEISDLHRRLRASGIVTAEIGLNGCFHADCYLDQLDPIIQFCDSQPDFQLPDASKVVIPTRSNATGELIRDGALHQHALRSILVEPPQWFESFTAVRDACAEDEGAIIFSFGPERCVPPSLLRVLSQKVVTVEDLDVLKRYQYSYSENDIAVVGMSCKVAGANNLEEFWDLLCTGKSQHREVPKERFSFETVFRDVDSKRKWFGNFIDGHDQFDHKFFKKSPRESATMDPQQRHLLQIAYQAVEQSGYFHSANPDRQIGCYMGVCACDYENNIACHAPNAFSATGNLQGFIAGKVSHFFGWTGPGLTIDTACSSSAVAVHQACKAIITGECTAALAGGTHVMTNPLWFQNLAGASFLSTTGQCKPFDAKADGYCRGEGIATVFLKKLSAAVADGDQILGVITATAVQQNQNCTPIFVPNVPSLSDLFRVVVKQSRLQPSDVTVVEAHGTGTAVGDPAEYDSIRSVLGGSSREKTLALSSVKGLVGHIECTSGIVSLIKVLLMLQKRMIPPQASFTTINPAIKATPADKINIPTTVKTWDAEFCAALINNYGASGSNASIVVTQPPVGTVKPSAETSGLKYPFRFCGMDEQSLRRYSKIFRQFLNRKSYSAQDLSLRNISFNVNRQSNRQLDRTLLFSVKTLEELEQKLVTFENDNDSITSLALPKSKPVVLCFGGQVSTFVGLDRTVYERVAILRKHLHTVDAVARSIGLKSIFPRIFETTPVSDTVHLQIMLFASQYACARSWIDSGIQPVAVVGHSFGELTSLCVSQSLSLEDAVKMIAARATLIRDAWGPEKGAMLAVEADLEDVQKLLAESSAGCQDVQPATIACYNGPRSFTLAGAVAAIDAVAEALATPAFSSMKNKRLNVTNAFHCALVDPLLDRLEESARELTFRAPVIPVQRATEYQTEELPTSRFVADHIRSPVFFNHAIHRLADKYPSCVFLEAGSNSTVTNMASRALGNPSSSHFQAINITSHNGWNNLVDATMNMWKSGLGVHFWAHQPSQTKEYALLLLPPYQFEPSRHWIELKNPPKLTAAPAIEEVKKEEAKVPNTLLTFVGYQDSERQQARFRVNTMIPKYDKLIRGHIIAQTAPICPATVQLDLVIESIRSIRPELASTEHEPQIHAVENLAPICVNPLRAVWVEVTADDVAQGTSWNFQVYSDDLQNGFSKTIHTTGRVIFRSISDVSLKYEFARFERHFRHQTCVELMRGGEVDEVLQNRNIYKMFAEIVDYGEDYRGLQKLVSKGNQSAGYVVKKYNPESWLDGHLADSFCQVGGIYVNCMTDRVPNDMFIANGIEQWMRSPKMRQQDPRPESYHVLATHHRPSDKAFLTDVFAFDSTTGVLIEVILGISYVKIPKASMSKLLSRLTVNDSASCPTNMPLLSKSASVNLFDAPENLSTPSLSVAPTQQSAPALSLSKVKKVKNDGPDKGQLTQRIKSILAELSGLEIAEIKDDSELADLGIDSLMGMEMAHEIEKAFTISLPESDLMEVVDVPSLIKCVRKAMSGDADSAEYTTEQSTSEAADSDDKSTNYTTPSTPGEEALDMDKSMREFLGKEGTELNLPFETVMKAFNETKNMTDDRIAEYQQTRYVESVLPMQSQMCVSLVLEAFDQLNMRIRTAPAGEKFTRISHPKEHTRLVDYLYKMLEDASLINIDGEVITRTAIQVPRPSKEIFDELVSQHPDQNAADKLTFYTGSHLAEVLKGETDGIKLIFGTQDGRELVSKLYRDWPLNRLFYRQMEDFLERLTSKLDISQGVIKILEMGAGTGGTTKWLVPLLAKLNIPVEYTFTDIAPSFVAAARKKFSKQYPFMKFRTHDIEKAPADDLIGSQHVIIASNAVHATHSLSESGKNIRKALRPDGVLLMLEMTGTLHWVDIIFGLFEGWWYFDDGRTHAVTHESRWAKDLQAVGYGHVDWTDGVRPENKLEKLIIAFASGGRYERLHIPRPLESASADCAARQAVVDRYVQEMTAGFGAATGVSPSAPLAHQEPKGCCVLVTGATGSLGCHLLAALTSLPTIASVVCLNRRSRQDPLERQHRSLLEKKIFLSEETAARVRVIETDMSKPQLGLLEEEYNYLLNSVTHIVHNAWLMNAKLPLRRFEPQLQIMRNLLDLAYGISLQRPMEKVSFQFISSIATVGHWPIWTGKSSVPEERMAIESVLPTGYGDAKYICERMIDETLHKYPDRFRAMVVRPGQVAGSSTSGYWNTMEHFSFLVKSSQTLNALPDFDGVLSWTPVDVVASTLVDLLLLPEDKTPYSIYHIDNPVRQPWKEMNVVLADALHIPRSNIIPFEKWIQRVKDYPRQVEGAEGDNPAILLVDFLDNNFIRMSCGGLLLETKKSREHSKTLANLGPVSAETARLFIKSWIDMGFLSP</sequence>
<gene>
    <name evidence="11" type="primary">dbaI</name>
    <name evidence="10" type="synonym">pkeA</name>
    <name type="ORF">ANIA_07903</name>
</gene>